<evidence type="ECO:0000250" key="1"/>
<evidence type="ECO:0000255" key="2">
    <source>
        <dbReference type="PROSITE-ProRule" id="PRU01210"/>
    </source>
</evidence>
<evidence type="ECO:0000305" key="3"/>
<protein>
    <recommendedName>
        <fullName>Toxin Cll5c*</fullName>
    </recommendedName>
</protein>
<accession>Q7Z1K6</accession>
<name>SCX5X_CENLI</name>
<comment type="function">
    <text evidence="1">Beta toxins bind voltage-independently at site-4 of sodium channels (Nav) and shift the voltage of activation toward more negative potentials thereby affecting sodium channel activation and promoting spontaneous and repetitive firing.</text>
</comment>
<comment type="subcellular location">
    <subcellularLocation>
        <location evidence="1">Secreted</location>
    </subcellularLocation>
</comment>
<comment type="tissue specificity">
    <text>Expressed by the venom gland.</text>
</comment>
<comment type="domain">
    <text evidence="3">Has the structural arrangement of an alpha-helix connected to antiparallel beta-sheets by disulfide bonds (CS-alpha/beta).</text>
</comment>
<comment type="similarity">
    <text evidence="3">Belongs to the long (4 C-C) scorpion toxin superfamily. Sodium channel inhibitor family. Beta subfamily.</text>
</comment>
<reference key="1">
    <citation type="submission" date="2002-03" db="EMBL/GenBank/DDBJ databases">
        <title>Genes and peptides from the scorpion Centruroides limpidus limpidus, that recognize Na(+)-channels.</title>
        <authorList>
            <person name="Corona M."/>
            <person name="Possani L.D."/>
        </authorList>
    </citation>
    <scope>NUCLEOTIDE SEQUENCE [MRNA]</scope>
</reference>
<proteinExistence type="evidence at transcript level"/>
<organism>
    <name type="scientific">Centruroides limpidus</name>
    <name type="common">Mexican scorpion</name>
    <dbReference type="NCBI Taxonomy" id="6876"/>
    <lineage>
        <taxon>Eukaryota</taxon>
        <taxon>Metazoa</taxon>
        <taxon>Ecdysozoa</taxon>
        <taxon>Arthropoda</taxon>
        <taxon>Chelicerata</taxon>
        <taxon>Arachnida</taxon>
        <taxon>Scorpiones</taxon>
        <taxon>Buthida</taxon>
        <taxon>Buthoidea</taxon>
        <taxon>Buthidae</taxon>
        <taxon>Centruroides</taxon>
    </lineage>
</organism>
<sequence length="85" mass="9473">MNSLLIITACLVLFVWAKEGYLVNKSTGCKYGCFWLGKNENCDMECKAKNQGGSYGYCYSFACWCEGLPDSTPTYPLPNKSCSKK</sequence>
<dbReference type="EMBL" id="AF491130">
    <property type="protein sequence ID" value="AAP49505.1"/>
    <property type="molecule type" value="mRNA"/>
</dbReference>
<dbReference type="SMR" id="Q7Z1K6"/>
<dbReference type="GO" id="GO:0005576">
    <property type="term" value="C:extracellular region"/>
    <property type="evidence" value="ECO:0007669"/>
    <property type="project" value="UniProtKB-SubCell"/>
</dbReference>
<dbReference type="GO" id="GO:0019871">
    <property type="term" value="F:sodium channel inhibitor activity"/>
    <property type="evidence" value="ECO:0007669"/>
    <property type="project" value="InterPro"/>
</dbReference>
<dbReference type="GO" id="GO:0090729">
    <property type="term" value="F:toxin activity"/>
    <property type="evidence" value="ECO:0007669"/>
    <property type="project" value="UniProtKB-KW"/>
</dbReference>
<dbReference type="GO" id="GO:0006952">
    <property type="term" value="P:defense response"/>
    <property type="evidence" value="ECO:0007669"/>
    <property type="project" value="InterPro"/>
</dbReference>
<dbReference type="CDD" id="cd23106">
    <property type="entry name" value="neurotoxins_LC_scorpion"/>
    <property type="match status" value="1"/>
</dbReference>
<dbReference type="FunFam" id="3.30.30.10:FF:000002">
    <property type="entry name" value="Alpha-like toxin BmK-M1"/>
    <property type="match status" value="1"/>
</dbReference>
<dbReference type="Gene3D" id="3.30.30.10">
    <property type="entry name" value="Knottin, scorpion toxin-like"/>
    <property type="match status" value="1"/>
</dbReference>
<dbReference type="InterPro" id="IPR044062">
    <property type="entry name" value="LCN-type_CS_alpha_beta_dom"/>
</dbReference>
<dbReference type="InterPro" id="IPR003614">
    <property type="entry name" value="Scorpion_toxin-like"/>
</dbReference>
<dbReference type="InterPro" id="IPR036574">
    <property type="entry name" value="Scorpion_toxin-like_sf"/>
</dbReference>
<dbReference type="InterPro" id="IPR018218">
    <property type="entry name" value="Scorpion_toxinL"/>
</dbReference>
<dbReference type="InterPro" id="IPR002061">
    <property type="entry name" value="Scorpion_toxinL/defensin"/>
</dbReference>
<dbReference type="Pfam" id="PF00537">
    <property type="entry name" value="Toxin_3"/>
    <property type="match status" value="1"/>
</dbReference>
<dbReference type="PRINTS" id="PR00285">
    <property type="entry name" value="SCORPNTOXIN"/>
</dbReference>
<dbReference type="SMART" id="SM00505">
    <property type="entry name" value="Knot1"/>
    <property type="match status" value="1"/>
</dbReference>
<dbReference type="SUPFAM" id="SSF57095">
    <property type="entry name" value="Scorpion toxin-like"/>
    <property type="match status" value="1"/>
</dbReference>
<dbReference type="PROSITE" id="PS51863">
    <property type="entry name" value="LCN_CSAB"/>
    <property type="match status" value="1"/>
</dbReference>
<keyword id="KW-1015">Disulfide bond</keyword>
<keyword id="KW-0872">Ion channel impairing toxin</keyword>
<keyword id="KW-0528">Neurotoxin</keyword>
<keyword id="KW-0964">Secreted</keyword>
<keyword id="KW-0732">Signal</keyword>
<keyword id="KW-0800">Toxin</keyword>
<keyword id="KW-0738">Voltage-gated sodium channel impairing toxin</keyword>
<feature type="signal peptide" evidence="1">
    <location>
        <begin position="1"/>
        <end position="17"/>
    </location>
</feature>
<feature type="chain" id="PRO_0000035273" description="Toxin Cll5c*">
    <location>
        <begin position="18"/>
        <end position="83"/>
    </location>
</feature>
<feature type="propeptide" id="PRO_0000035274" description="Removed by a carboxypeptidase" evidence="1">
    <location>
        <begin position="84"/>
        <end position="85"/>
    </location>
</feature>
<feature type="domain" description="LCN-type CS-alpha/beta" evidence="2">
    <location>
        <begin position="18"/>
        <end position="83"/>
    </location>
</feature>
<feature type="disulfide bond" evidence="2">
    <location>
        <begin position="29"/>
        <end position="82"/>
    </location>
</feature>
<feature type="disulfide bond" evidence="2">
    <location>
        <begin position="33"/>
        <end position="58"/>
    </location>
</feature>
<feature type="disulfide bond" evidence="2">
    <location>
        <begin position="42"/>
        <end position="63"/>
    </location>
</feature>
<feature type="disulfide bond" evidence="2">
    <location>
        <begin position="46"/>
        <end position="65"/>
    </location>
</feature>